<organism>
    <name type="scientific">Rotavirus A (strain RVA/Human/Philippines/L26/1987/G12P1B[4])</name>
    <name type="common">RV-A</name>
    <dbReference type="NCBI Taxonomy" id="10953"/>
    <lineage>
        <taxon>Viruses</taxon>
        <taxon>Riboviria</taxon>
        <taxon>Orthornavirae</taxon>
        <taxon>Duplornaviricota</taxon>
        <taxon>Resentoviricetes</taxon>
        <taxon>Reovirales</taxon>
        <taxon>Sedoreoviridae</taxon>
        <taxon>Rotavirus</taxon>
        <taxon>Rotavirus A</taxon>
    </lineage>
</organism>
<organismHost>
    <name type="scientific">Homo sapiens</name>
    <name type="common">Human</name>
    <dbReference type="NCBI Taxonomy" id="9606"/>
</organismHost>
<feature type="chain" id="PRO_0000368060" description="Inner capsid protein VP2">
    <location>
        <begin position="1"/>
        <end position="879"/>
    </location>
</feature>
<feature type="region of interest" description="5-fold hub; involved in the encapsidation of VP1 and VP3" evidence="1">
    <location>
        <begin position="1"/>
        <end position="79"/>
    </location>
</feature>
<feature type="region of interest" description="Disordered" evidence="2">
    <location>
        <begin position="1"/>
        <end position="52"/>
    </location>
</feature>
<feature type="region of interest" description="Hydrophobic" evidence="1">
    <location>
        <begin position="393"/>
        <end position="413"/>
    </location>
</feature>
<feature type="region of interest" description="Hydrophobic" evidence="1">
    <location>
        <begin position="421"/>
        <end position="441"/>
    </location>
</feature>
<feature type="compositionally biased region" description="Basic and acidic residues" evidence="2">
    <location>
        <begin position="9"/>
        <end position="30"/>
    </location>
</feature>
<feature type="compositionally biased region" description="Basic and acidic residues" evidence="2">
    <location>
        <begin position="39"/>
        <end position="52"/>
    </location>
</feature>
<feature type="site" description="Interaction with the intermediate capsid protein VP6" evidence="1">
    <location>
        <position position="219"/>
    </location>
</feature>
<feature type="site" description="Interaction with the intermediate capsid protein VP6" evidence="1">
    <location>
        <position position="223"/>
    </location>
</feature>
<feature type="site" description="Interaction with the intermediate capsid protein VP6" evidence="1">
    <location>
        <position position="227"/>
    </location>
</feature>
<feature type="site" description="Interaction with the intermediate capsid protein VP6" evidence="1">
    <location>
        <position position="838"/>
    </location>
</feature>
<feature type="site" description="Interaction with the intermediate capsid protein VP6" evidence="1">
    <location>
        <position position="840"/>
    </location>
</feature>
<comment type="function">
    <text evidence="1">Inner capsid protein that self-assembles to form an icosahedral capsid with a T=2 symmetry, which consists of 120 copies of VP2, with channels at each of its five-fold vertices. This capsid constitutes the innermost concentric layer of the viral mature particle. It encapsidates the polymerase VP1, the capping enzyme VP3 and the genomic dsRNA, thereby defining the core. The innermost VP2 capsid and the intermediate VP6 capsid remain intact following cell entry to protect the dsRNA from degradation and to prevent unfavorable antiviral responses in the host cell during all the replication cycle of the virus. Nascent transcripts are transcribed within the structural confines of this double-layered particle (DLP) and are extruded through the channels formed by VP2 N-termini. VP2 is required for the replicase activity of VP1 polymerase. Probably recruits a copy of a VP1-VP3 complex, potentially along with a segment of plus-strand RNA, as a decamer of VP2 assembles. May activate the autoinhibited VP1/RNA complex to coordinate packaging and genome replication.</text>
</comment>
<comment type="subunit">
    <text evidence="1">Homodecamer; each decamer is made up of two conformers of VP2, called VP2A and VP2B. Interacts with a VP1-VP3 complex. Interacts with the intermediate capsid protein VP6. Interacts with NSP5. Interacts (via N-terminus) with NSP2.</text>
</comment>
<comment type="subcellular location">
    <subcellularLocation>
        <location evidence="1">Virion</location>
    </subcellularLocation>
    <text evidence="1">Inner capsid protein. Also found in spherical cytoplasmic structures, called virus factories, that appear early after infection and are the site of viral replication and packaging.</text>
</comment>
<comment type="domain">
    <text evidence="1">The N-terminus binds RNA. It is necessary for encapsidation of VP1 and VP3. The N-termini of 10 VP2 molecules form a cylindrical hub underneath each 5-fold axis of the inner capsid.</text>
</comment>
<comment type="PTM">
    <text evidence="1">Sumoylated with SUMO1 and SUMO2. Sumoylation of viral proteins seems to have a positive role on viral replication.</text>
</comment>
<comment type="similarity">
    <text evidence="1">Belongs to the rotavirus VP2 family.</text>
</comment>
<keyword id="KW-0167">Capsid protein</keyword>
<keyword id="KW-1153">Inner capsid protein</keyword>
<keyword id="KW-0677">Repeat</keyword>
<keyword id="KW-0694">RNA-binding</keyword>
<keyword id="KW-1141">T=2 icosahedral capsid protein</keyword>
<keyword id="KW-0832">Ubl conjugation</keyword>
<keyword id="KW-0946">Virion</keyword>
<sequence length="879" mass="102408">MAYRKRGARREANLNNDDRMQEKNDEKQDSNKIQLSDKVLSKKEEVVTDSHEEVKITDEAKKSTKEESKQLLEVLKTKEEHQKEIQYEILQKTIPTFEPKETILRKLEDIKPELAKKQTKLFRIFEPKQLPIYRANGERELRNRWYWKLKKDTLPDGDYDVREYFLNLYDQVLTEMPDYLLLKDMAVENKNSRDAGKVVDSETASICDAIFQDEETEGAVRRFIAEMRQRVQADRNVVNYPSILHPIDYAFNEYFLQHQLVEPLNNDIIFNYIPERIRNDVNYILNMDRNLPSTARYIRPNLLQDRLNLHDNFESLWDTITTSNYILARSVVPDLKELVSTEAQIQKMSQDLQLEALTIQSETQFLTGINSQAANDCFKTLIAAMLSQRTMSLDFVTTNYMSLISGMWLLTVIPNDMFIRESLVACQLAIVNTIIYPAFGMQRMHYRNGDPQTPFHIAEQQIQNFQVANWLHFVNNNQFRQVVIDGVLNQVLNDNIRNGHVINQLMEALMQLSRQQFPTMPVDYKRSIQRGILLLSNRLGQLVDLTRLLAYNYETLMACITMNMQHVQTLTTEKLQLTSVTSLCMLIGNATVIPSPQTLFHYYNVNVNFHSNYNERINDAVAIITAANRLNLYQKKMKAIVEDFLKRLYIFDVSRVPDDQMYRLRDRLRLLPVEIRRLDIFNLILMNMDQIERASDKIAQGVIIAYRDMHLERDEMYGYVNIARNLDGFQQINLEELMRSGDYAQITNMLLNNQPVALVGALPFITDSSVISLIAKLDATVFAQIVKLRKVDTLKPILYKINSDSNDFYLVANYDWVPTSTTKVYKQVPQQFDFRNSMHMLTSNLTFTVYSDLLAFVSADTVEPINAVAFDNMRIMNEL</sequence>
<protein>
    <recommendedName>
        <fullName evidence="1">Inner capsid protein VP2</fullName>
    </recommendedName>
</protein>
<accession>A3DSK6</accession>
<accession>B1NKS6</accession>
<evidence type="ECO:0000255" key="1">
    <source>
        <dbReference type="HAMAP-Rule" id="MF_04127"/>
    </source>
</evidence>
<evidence type="ECO:0000256" key="2">
    <source>
        <dbReference type="SAM" id="MobiDB-lite"/>
    </source>
</evidence>
<reference key="1">
    <citation type="journal article" date="2007" name="J. Virol.">
        <title>Evolutionary history and global spread of the emerging G12 human rotaviruses.</title>
        <authorList>
            <person name="Rahman M."/>
            <person name="Matthijnssens J."/>
            <person name="Yang X."/>
            <person name="Delbeke T."/>
            <person name="Arijs I."/>
            <person name="Taniguchi K."/>
            <person name="Iturriza-Gomara M."/>
            <person name="Iftekharuddin N."/>
            <person name="Azim T."/>
            <person name="Van Ranst M."/>
        </authorList>
    </citation>
    <scope>NUCLEOTIDE SEQUENCE [GENOMIC RNA]</scope>
</reference>
<reference key="2">
    <citation type="journal article" date="2008" name="J. Virol.">
        <title>Full genome-based classification of rotaviruses reveals a common origin between human Wa-Like and porcine rotavirus strains and human DS-1-like and bovine rotavirus strains.</title>
        <authorList>
            <person name="Matthijnssens J."/>
            <person name="Ciarlet M."/>
            <person name="Heiman E.M."/>
            <person name="Arijs I."/>
            <person name="Delbeke T."/>
            <person name="McDonald S.M."/>
            <person name="Palombo E.A."/>
            <person name="Iturriza-Gomara M."/>
            <person name="Maes P."/>
            <person name="Patton J.T."/>
            <person name="Rahman M."/>
            <person name="Van Ranst M."/>
        </authorList>
    </citation>
    <scope>NUCLEOTIDE SEQUENCE [GENOMIC RNA]</scope>
</reference>
<dbReference type="EMBL" id="DQ146694">
    <property type="protein sequence ID" value="ABA34197.1"/>
    <property type="molecule type" value="Genomic_RNA"/>
</dbReference>
<dbReference type="EMBL" id="EF583034">
    <property type="protein sequence ID" value="ABU87843.1"/>
    <property type="molecule type" value="Genomic_RNA"/>
</dbReference>
<dbReference type="SMR" id="A3DSK6"/>
<dbReference type="Proteomes" id="UP000001459">
    <property type="component" value="Genome"/>
</dbReference>
<dbReference type="GO" id="GO:0039616">
    <property type="term" value="C:T=2 icosahedral viral capsid"/>
    <property type="evidence" value="ECO:0007669"/>
    <property type="project" value="UniProtKB-UniRule"/>
</dbReference>
<dbReference type="GO" id="GO:0039625">
    <property type="term" value="C:viral inner capsid"/>
    <property type="evidence" value="ECO:0007669"/>
    <property type="project" value="UniProtKB-UniRule"/>
</dbReference>
<dbReference type="GO" id="GO:0019013">
    <property type="term" value="C:viral nucleocapsid"/>
    <property type="evidence" value="ECO:0007669"/>
    <property type="project" value="UniProtKB-UniRule"/>
</dbReference>
<dbReference type="GO" id="GO:0003723">
    <property type="term" value="F:RNA binding"/>
    <property type="evidence" value="ECO:0007669"/>
    <property type="project" value="UniProtKB-UniRule"/>
</dbReference>
<dbReference type="HAMAP" id="MF_04123">
    <property type="entry name" value="Rota_VP2"/>
    <property type="match status" value="1"/>
</dbReference>
<dbReference type="HAMAP" id="MF_04127">
    <property type="entry name" value="Rota_VP2_A"/>
    <property type="match status" value="1"/>
</dbReference>
<dbReference type="InterPro" id="IPR007779">
    <property type="entry name" value="Rotavirus_VP2"/>
</dbReference>
<dbReference type="Pfam" id="PF05087">
    <property type="entry name" value="Rota_VP2"/>
    <property type="match status" value="1"/>
</dbReference>
<name>VP2_ROTHL</name>
<proteinExistence type="inferred from homology"/>